<protein>
    <recommendedName>
        <fullName>E1B protein, small T-antigen</fullName>
    </recommendedName>
    <alternativeName>
        <fullName>E1B 19 kDa protein</fullName>
        <shortName>E1B-19K</shortName>
    </alternativeName>
</protein>
<organismHost>
    <name type="scientific">Homo sapiens</name>
    <name type="common">Human</name>
    <dbReference type="NCBI Taxonomy" id="9606"/>
</organismHost>
<comment type="function">
    <text evidence="1">Putative adenovirus Bcl-2 homolog that inhibits apoptosis induced by TNF or FAS pathways, as well as p53-mediated apoptosis. Without E1B 19K function, virus production is compromised because of premature death of host cell. Interacts with Bax protein in cell lysates (By similarity).</text>
</comment>
<comment type="subcellular location">
    <subcellularLocation>
        <location evidence="1">Host cell membrane</location>
    </subcellularLocation>
    <subcellularLocation>
        <location evidence="1">Host nucleus envelope</location>
    </subcellularLocation>
    <subcellularLocation>
        <location evidence="1">Host nucleus lamina</location>
    </subcellularLocation>
    <text evidence="1">Associated with the plasma and nuclear membranes, and with the insoluble nuclear lamina.</text>
</comment>
<comment type="similarity">
    <text evidence="2">Belongs to the adenoviridae E1B 19 kDa protein family.</text>
</comment>
<keyword id="KW-0053">Apoptosis</keyword>
<keyword id="KW-0244">Early protein</keyword>
<keyword id="KW-1032">Host cell membrane</keyword>
<keyword id="KW-1043">Host membrane</keyword>
<keyword id="KW-1048">Host nucleus</keyword>
<keyword id="KW-0945">Host-virus interaction</keyword>
<keyword id="KW-1081">Inhibition of host apoptosis by viral BCL2-like protein</keyword>
<keyword id="KW-0472">Membrane</keyword>
<keyword id="KW-1119">Modulation of host cell apoptosis by virus</keyword>
<feature type="chain" id="PRO_0000221711" description="E1B protein, small T-antigen">
    <location>
        <begin position="1"/>
        <end position="142"/>
    </location>
</feature>
<evidence type="ECO:0000250" key="1"/>
<evidence type="ECO:0000305" key="2"/>
<organism>
    <name type="scientific">Human adenovirus E serotype 4</name>
    <name type="common">HAdV-4</name>
    <name type="synonym">Human adenovirus 4</name>
    <dbReference type="NCBI Taxonomy" id="28280"/>
    <lineage>
        <taxon>Viruses</taxon>
        <taxon>Varidnaviria</taxon>
        <taxon>Bamfordvirae</taxon>
        <taxon>Preplasmiviricota</taxon>
        <taxon>Tectiliviricetes</taxon>
        <taxon>Rowavirales</taxon>
        <taxon>Adenoviridae</taxon>
        <taxon>Mastadenovirus</taxon>
        <taxon>Human mastadenovirus E</taxon>
    </lineage>
</organism>
<name>E1BS_ADE04</name>
<proteinExistence type="inferred from homology"/>
<accession>P10406</accession>
<dbReference type="EMBL" id="M14918">
    <property type="protein sequence ID" value="AAA67093.1"/>
    <property type="molecule type" value="Genomic_DNA"/>
</dbReference>
<dbReference type="PIR" id="B25614">
    <property type="entry name" value="WMAD19"/>
</dbReference>
<dbReference type="GO" id="GO:0044203">
    <property type="term" value="C:host cell nuclear lamina"/>
    <property type="evidence" value="ECO:0007669"/>
    <property type="project" value="UniProtKB-SubCell"/>
</dbReference>
<dbReference type="GO" id="GO:0020002">
    <property type="term" value="C:host cell plasma membrane"/>
    <property type="evidence" value="ECO:0007669"/>
    <property type="project" value="UniProtKB-SubCell"/>
</dbReference>
<dbReference type="GO" id="GO:0016020">
    <property type="term" value="C:membrane"/>
    <property type="evidence" value="ECO:0007669"/>
    <property type="project" value="UniProtKB-KW"/>
</dbReference>
<dbReference type="GO" id="GO:0033668">
    <property type="term" value="P:symbiont-mediated suppression of host apoptosis"/>
    <property type="evidence" value="ECO:0007669"/>
    <property type="project" value="UniProtKB-KW"/>
</dbReference>
<dbReference type="InterPro" id="IPR002924">
    <property type="entry name" value="Adenovir_t-Ag_E1B_19kDa"/>
</dbReference>
<dbReference type="InterPro" id="IPR002475">
    <property type="entry name" value="Bcl2-like"/>
</dbReference>
<dbReference type="Pfam" id="PF01691">
    <property type="entry name" value="Adeno_E1B_19K"/>
    <property type="match status" value="1"/>
</dbReference>
<dbReference type="PROSITE" id="PS50062">
    <property type="entry name" value="BCL2_FAMILY"/>
    <property type="match status" value="1"/>
</dbReference>
<reference key="1">
    <citation type="journal article" date="1986" name="Virology">
        <title>Sequence analysis in the E1 region of adenovirus type 4 DNA.</title>
        <authorList>
            <person name="Tokunaga O."/>
            <person name="Yaegashi T."/>
            <person name="Lowe J."/>
            <person name="Dobbs L."/>
            <person name="Padmanabhan R."/>
        </authorList>
    </citation>
    <scope>NUCLEOTIDE SEQUENCE [GENOMIC DNA]</scope>
</reference>
<sequence>MEIWTVLEDFHKTRQLLENASNGVSHLWRFCFGGDLAKLVYRAKQDYREQFEDILRECPSLFDALNLGHQSHFNQRISRALDFTTPGRTTAAVAFFAFIFDKWSQETHFSRDYQLDFLAVALWRTWKCQRLNAIPATCRYSR</sequence>